<comment type="function">
    <text evidence="1 3 4 5">Decarboxylase; part of the gene cluster that mediates the biosynthesis of trypacidin, a mycotoxin with antiprotozoal activity and that plays a role in the infection process (PubMed:26242966, PubMed:26278536). The pathway begins with the synthesis of atrochrysone thioester by the polyketide synthase (PKS) tpcC (PubMed:26242966). The atrochrysone carboxyl ACP thioesterase tpcB then breaks the thioester bond and releases the atrochrysone carboxylic acid from tpcC (PubMed:26242966). The decarboxylase tpcK converts atrochrysone carboxylic acid to atrochrysone which is further reduced into emodin anthrone (PubMed:26242966). The next step is performed by the emodin anthrone oxygenase tpcL that catalyzes the oxidation of emodin anthrone to emodin (PubMed:26242966). Emodin O-methyltransferase encoded by tpcA catalyzes methylation of the 8-hydroxy group of emodin to form questin (PubMed:26242966). Ring cleavage of questin by questin oxidase tpcI leads to desmethylsulochrin via several intermediates including questin epoxide (By similarity). Another methylation step catalyzed by tpcM leads to the formation of sulochrin which is further converted to monomethylsulfochrin by tpcH. Finally, the tpcJ catalyzes the conversion of monomethylsulfochrin to trypacidin (PubMed:26242966). Trypacidin is toxic for human pulmonary and bronchial epithelial cells by initiating the intracellular formation of nitric oxide (NO) and hydrogen peroxide (H(2)O(2)), thus triggering host necrotic cell death (PubMed:22319557). The trypacidin pathway is also able to produce endocrocin via a distinct route from the endocrocin Enc pathway (PubMed:26242966).</text>
</comment>
<comment type="catalytic activity">
    <reaction evidence="10">
        <text>atrochrysone carboxylate + H(+) = atrochrysone + CO2</text>
        <dbReference type="Rhea" id="RHEA:64264"/>
        <dbReference type="ChEBI" id="CHEBI:15378"/>
        <dbReference type="ChEBI" id="CHEBI:16526"/>
        <dbReference type="ChEBI" id="CHEBI:149713"/>
        <dbReference type="ChEBI" id="CHEBI:150016"/>
    </reaction>
    <physiologicalReaction direction="left-to-right" evidence="10">
        <dbReference type="Rhea" id="RHEA:64265"/>
    </physiologicalReaction>
</comment>
<comment type="pathway">
    <text evidence="4">Secondary metabolite biosynthesis.</text>
</comment>
<comment type="tissue specificity">
    <text evidence="9">Specifically expressed in conidia (PubMed:22319557).</text>
</comment>
<comment type="similarity">
    <text evidence="8">Belongs to the tpcK family.</text>
</comment>
<gene>
    <name evidence="6" type="primary">tpcK</name>
    <name evidence="7" type="synonym">tynK</name>
    <name type="ORF">AFUA_4G14470</name>
</gene>
<evidence type="ECO:0000250" key="1">
    <source>
        <dbReference type="UniProtKB" id="Q0CCX8"/>
    </source>
</evidence>
<evidence type="ECO:0000255" key="2"/>
<evidence type="ECO:0000269" key="3">
    <source>
    </source>
</evidence>
<evidence type="ECO:0000269" key="4">
    <source>
    </source>
</evidence>
<evidence type="ECO:0000269" key="5">
    <source>
    </source>
</evidence>
<evidence type="ECO:0000303" key="6">
    <source>
    </source>
</evidence>
<evidence type="ECO:0000303" key="7">
    <source>
    </source>
</evidence>
<evidence type="ECO:0000305" key="8"/>
<evidence type="ECO:0000305" key="9">
    <source>
    </source>
</evidence>
<evidence type="ECO:0000305" key="10">
    <source>
    </source>
</evidence>
<feature type="chain" id="PRO_0000437109" description="Decarboxylase tpcK">
    <location>
        <begin position="1"/>
        <end position="142"/>
    </location>
</feature>
<feature type="domain" description="EthD" evidence="2">
    <location>
        <begin position="22"/>
        <end position="117"/>
    </location>
</feature>
<reference key="1">
    <citation type="journal article" date="2005" name="Nature">
        <title>Genomic sequence of the pathogenic and allergenic filamentous fungus Aspergillus fumigatus.</title>
        <authorList>
            <person name="Nierman W.C."/>
            <person name="Pain A."/>
            <person name="Anderson M.J."/>
            <person name="Wortman J.R."/>
            <person name="Kim H.S."/>
            <person name="Arroyo J."/>
            <person name="Berriman M."/>
            <person name="Abe K."/>
            <person name="Archer D.B."/>
            <person name="Bermejo C."/>
            <person name="Bennett J.W."/>
            <person name="Bowyer P."/>
            <person name="Chen D."/>
            <person name="Collins M."/>
            <person name="Coulsen R."/>
            <person name="Davies R."/>
            <person name="Dyer P.S."/>
            <person name="Farman M.L."/>
            <person name="Fedorova N."/>
            <person name="Fedorova N.D."/>
            <person name="Feldblyum T.V."/>
            <person name="Fischer R."/>
            <person name="Fosker N."/>
            <person name="Fraser A."/>
            <person name="Garcia J.L."/>
            <person name="Garcia M.J."/>
            <person name="Goble A."/>
            <person name="Goldman G.H."/>
            <person name="Gomi K."/>
            <person name="Griffith-Jones S."/>
            <person name="Gwilliam R."/>
            <person name="Haas B.J."/>
            <person name="Haas H."/>
            <person name="Harris D.E."/>
            <person name="Horiuchi H."/>
            <person name="Huang J."/>
            <person name="Humphray S."/>
            <person name="Jimenez J."/>
            <person name="Keller N."/>
            <person name="Khouri H."/>
            <person name="Kitamoto K."/>
            <person name="Kobayashi T."/>
            <person name="Konzack S."/>
            <person name="Kulkarni R."/>
            <person name="Kumagai T."/>
            <person name="Lafton A."/>
            <person name="Latge J.-P."/>
            <person name="Li W."/>
            <person name="Lord A."/>
            <person name="Lu C."/>
            <person name="Majoros W.H."/>
            <person name="May G.S."/>
            <person name="Miller B.L."/>
            <person name="Mohamoud Y."/>
            <person name="Molina M."/>
            <person name="Monod M."/>
            <person name="Mouyna I."/>
            <person name="Mulligan S."/>
            <person name="Murphy L.D."/>
            <person name="O'Neil S."/>
            <person name="Paulsen I."/>
            <person name="Penalva M.A."/>
            <person name="Pertea M."/>
            <person name="Price C."/>
            <person name="Pritchard B.L."/>
            <person name="Quail M.A."/>
            <person name="Rabbinowitsch E."/>
            <person name="Rawlins N."/>
            <person name="Rajandream M.A."/>
            <person name="Reichard U."/>
            <person name="Renauld H."/>
            <person name="Robson G.D."/>
            <person name="Rodriguez de Cordoba S."/>
            <person name="Rodriguez-Pena J.M."/>
            <person name="Ronning C.M."/>
            <person name="Rutter S."/>
            <person name="Salzberg S.L."/>
            <person name="Sanchez M."/>
            <person name="Sanchez-Ferrero J.C."/>
            <person name="Saunders D."/>
            <person name="Seeger K."/>
            <person name="Squares R."/>
            <person name="Squares S."/>
            <person name="Takeuchi M."/>
            <person name="Tekaia F."/>
            <person name="Turner G."/>
            <person name="Vazquez de Aldana C.R."/>
            <person name="Weidman J."/>
            <person name="White O."/>
            <person name="Woodward J.R."/>
            <person name="Yu J.-H."/>
            <person name="Fraser C.M."/>
            <person name="Galagan J.E."/>
            <person name="Asai K."/>
            <person name="Machida M."/>
            <person name="Hall N."/>
            <person name="Barrell B.G."/>
            <person name="Denning D.W."/>
        </authorList>
    </citation>
    <scope>NUCLEOTIDE SEQUENCE [LARGE SCALE GENOMIC DNA]</scope>
    <source>
        <strain>ATCC MYA-4609 / CBS 101355 / FGSC A1100 / Af293</strain>
    </source>
</reference>
<reference key="2">
    <citation type="journal article" date="2012" name="PLoS ONE">
        <title>Trypacidin, a spore-borne toxin from Aspergillus fumigatus, is cytotoxic to lung cells.</title>
        <authorList>
            <person name="Gauthier T."/>
            <person name="Wang X."/>
            <person name="Sifuentes Dos Santos J."/>
            <person name="Fysikopoulos A."/>
            <person name="Tadrist S."/>
            <person name="Canlet C."/>
            <person name="Artigot M.P."/>
            <person name="Loiseau N."/>
            <person name="Oswald I.P."/>
            <person name="Puel O."/>
        </authorList>
    </citation>
    <scope>FUNCTION</scope>
    <scope>TISSUE SPECIFICITY</scope>
</reference>
<reference key="3">
    <citation type="journal article" date="2015" name="Appl. Microbiol. Biotechnol.">
        <title>Identification of the antiphagocytic trypacidin gene cluster in the human-pathogenic fungus Aspergillus fumigatus.</title>
        <authorList>
            <person name="Mattern D.J."/>
            <person name="Schoeler H."/>
            <person name="Weber J."/>
            <person name="Novohradska S."/>
            <person name="Kraibooj K."/>
            <person name="Dahse H.M."/>
            <person name="Hillmann F."/>
            <person name="Valiante V."/>
            <person name="Figge M.T."/>
            <person name="Brakhage A.A."/>
        </authorList>
    </citation>
    <scope>FUNCTION</scope>
</reference>
<reference key="4">
    <citation type="journal article" date="2016" name="Environ. Microbiol.">
        <title>Redundant synthesis of a conidial polyketide by two distinct secondary metabolite clusters in Aspergillus fumigatus.</title>
        <authorList>
            <person name="Throckmorton K."/>
            <person name="Lim F.Y."/>
            <person name="Kontoyiannis D.P."/>
            <person name="Zheng W."/>
            <person name="Keller N.P."/>
        </authorList>
    </citation>
    <scope>FUNCTION</scope>
</reference>
<keyword id="KW-0456">Lyase</keyword>
<keyword id="KW-1185">Reference proteome</keyword>
<protein>
    <recommendedName>
        <fullName evidence="10">Decarboxylase tpcK</fullName>
        <ecNumber evidence="10">4.1.1.-</ecNumber>
    </recommendedName>
    <alternativeName>
        <fullName evidence="6">Trypacidin synthesis protein K</fullName>
    </alternativeName>
</protein>
<organism>
    <name type="scientific">Aspergillus fumigatus (strain ATCC MYA-4609 / CBS 101355 / FGSC A1100 / Af293)</name>
    <name type="common">Neosartorya fumigata</name>
    <dbReference type="NCBI Taxonomy" id="330879"/>
    <lineage>
        <taxon>Eukaryota</taxon>
        <taxon>Fungi</taxon>
        <taxon>Dikarya</taxon>
        <taxon>Ascomycota</taxon>
        <taxon>Pezizomycotina</taxon>
        <taxon>Eurotiomycetes</taxon>
        <taxon>Eurotiomycetidae</taxon>
        <taxon>Eurotiales</taxon>
        <taxon>Aspergillaceae</taxon>
        <taxon>Aspergillus</taxon>
        <taxon>Aspergillus subgen. Fumigati</taxon>
    </lineage>
</organism>
<accession>Q4WQY7</accession>
<sequence length="142" mass="16711">MGESSRKPSRYLCLTICGYRKPGMSEEDYRRYMTEVSAPMTKDLMVKYGVKRWTMVHNTTATRALMAELCDSQMTNVVDFDCFSQVVFESLEDYKRMKQDPWYKEHLFHDHENFADTKKSMMTIGWIEEFVRQGVAVDGMDN</sequence>
<name>TPCK_ASPFU</name>
<dbReference type="EC" id="4.1.1.-" evidence="10"/>
<dbReference type="EMBL" id="AAHF01000005">
    <property type="protein sequence ID" value="EAL89347.1"/>
    <property type="molecule type" value="Genomic_DNA"/>
</dbReference>
<dbReference type="RefSeq" id="XP_751385.1">
    <property type="nucleotide sequence ID" value="XM_746292.1"/>
</dbReference>
<dbReference type="SMR" id="Q4WQY7"/>
<dbReference type="STRING" id="330879.Q4WQY7"/>
<dbReference type="EnsemblFungi" id="EAL89347">
    <property type="protein sequence ID" value="EAL89347"/>
    <property type="gene ID" value="AFUA_4G14470"/>
</dbReference>
<dbReference type="GeneID" id="3509609"/>
<dbReference type="KEGG" id="afm:AFUA_4G14470"/>
<dbReference type="VEuPathDB" id="FungiDB:Afu4g14470"/>
<dbReference type="eggNOG" id="ENOG502SJ0E">
    <property type="taxonomic scope" value="Eukaryota"/>
</dbReference>
<dbReference type="HOGENOM" id="CLU_115019_0_0_1"/>
<dbReference type="InParanoid" id="Q4WQY7"/>
<dbReference type="OMA" id="GWIEEWV"/>
<dbReference type="OrthoDB" id="3454835at2759"/>
<dbReference type="Proteomes" id="UP000002530">
    <property type="component" value="Chromosome 4"/>
</dbReference>
<dbReference type="GO" id="GO:0016829">
    <property type="term" value="F:lyase activity"/>
    <property type="evidence" value="ECO:0007669"/>
    <property type="project" value="UniProtKB-KW"/>
</dbReference>
<dbReference type="GO" id="GO:0016491">
    <property type="term" value="F:oxidoreductase activity"/>
    <property type="evidence" value="ECO:0007669"/>
    <property type="project" value="InterPro"/>
</dbReference>
<dbReference type="GO" id="GO:0044550">
    <property type="term" value="P:secondary metabolite biosynthetic process"/>
    <property type="evidence" value="ECO:0000317"/>
    <property type="project" value="AspGD"/>
</dbReference>
<dbReference type="FunFam" id="3.30.70.100:FF:000079">
    <property type="entry name" value="Probable decarboxylase tpcK"/>
    <property type="match status" value="1"/>
</dbReference>
<dbReference type="Gene3D" id="3.30.70.100">
    <property type="match status" value="1"/>
</dbReference>
<dbReference type="InterPro" id="IPR011008">
    <property type="entry name" value="Dimeric_a/b-barrel"/>
</dbReference>
<dbReference type="InterPro" id="IPR009799">
    <property type="entry name" value="EthD_dom"/>
</dbReference>
<dbReference type="Pfam" id="PF07110">
    <property type="entry name" value="EthD"/>
    <property type="match status" value="1"/>
</dbReference>
<dbReference type="SUPFAM" id="SSF54909">
    <property type="entry name" value="Dimeric alpha+beta barrel"/>
    <property type="match status" value="1"/>
</dbReference>
<proteinExistence type="evidence at transcript level"/>